<proteinExistence type="inferred from homology"/>
<evidence type="ECO:0000255" key="1">
    <source>
        <dbReference type="HAMAP-Rule" id="MF_00044"/>
    </source>
</evidence>
<name>SYDND_RHIME</name>
<gene>
    <name evidence="1" type="primary">aspS</name>
    <name type="ordered locus">R01194</name>
    <name type="ORF">SMc01756</name>
</gene>
<feature type="chain" id="PRO_0000110929" description="Aspartate--tRNA(Asp/Asn) ligase">
    <location>
        <begin position="1"/>
        <end position="595"/>
    </location>
</feature>
<feature type="region of interest" description="Aspartate" evidence="1">
    <location>
        <begin position="199"/>
        <end position="202"/>
    </location>
</feature>
<feature type="binding site" evidence="1">
    <location>
        <position position="175"/>
    </location>
    <ligand>
        <name>L-aspartate</name>
        <dbReference type="ChEBI" id="CHEBI:29991"/>
    </ligand>
</feature>
<feature type="binding site" evidence="1">
    <location>
        <begin position="221"/>
        <end position="223"/>
    </location>
    <ligand>
        <name>ATP</name>
        <dbReference type="ChEBI" id="CHEBI:30616"/>
    </ligand>
</feature>
<feature type="binding site" evidence="1">
    <location>
        <position position="221"/>
    </location>
    <ligand>
        <name>L-aspartate</name>
        <dbReference type="ChEBI" id="CHEBI:29991"/>
    </ligand>
</feature>
<feature type="binding site" evidence="1">
    <location>
        <position position="454"/>
    </location>
    <ligand>
        <name>L-aspartate</name>
        <dbReference type="ChEBI" id="CHEBI:29991"/>
    </ligand>
</feature>
<feature type="binding site" evidence="1">
    <location>
        <position position="488"/>
    </location>
    <ligand>
        <name>ATP</name>
        <dbReference type="ChEBI" id="CHEBI:30616"/>
    </ligand>
</feature>
<feature type="binding site" evidence="1">
    <location>
        <position position="495"/>
    </location>
    <ligand>
        <name>L-aspartate</name>
        <dbReference type="ChEBI" id="CHEBI:29991"/>
    </ligand>
</feature>
<feature type="binding site" evidence="1">
    <location>
        <begin position="540"/>
        <end position="543"/>
    </location>
    <ligand>
        <name>ATP</name>
        <dbReference type="ChEBI" id="CHEBI:30616"/>
    </ligand>
</feature>
<feature type="site" description="Important for tRNA non-discrimination" evidence="1">
    <location>
        <position position="33"/>
    </location>
</feature>
<accession>Q92QV4</accession>
<reference key="1">
    <citation type="journal article" date="2001" name="Proc. Natl. Acad. Sci. U.S.A.">
        <title>Analysis of the chromosome sequence of the legume symbiont Sinorhizobium meliloti strain 1021.</title>
        <authorList>
            <person name="Capela D."/>
            <person name="Barloy-Hubler F."/>
            <person name="Gouzy J."/>
            <person name="Bothe G."/>
            <person name="Ampe F."/>
            <person name="Batut J."/>
            <person name="Boistard P."/>
            <person name="Becker A."/>
            <person name="Boutry M."/>
            <person name="Cadieu E."/>
            <person name="Dreano S."/>
            <person name="Gloux S."/>
            <person name="Godrie T."/>
            <person name="Goffeau A."/>
            <person name="Kahn D."/>
            <person name="Kiss E."/>
            <person name="Lelaure V."/>
            <person name="Masuy D."/>
            <person name="Pohl T."/>
            <person name="Portetelle D."/>
            <person name="Puehler A."/>
            <person name="Purnelle B."/>
            <person name="Ramsperger U."/>
            <person name="Renard C."/>
            <person name="Thebault P."/>
            <person name="Vandenbol M."/>
            <person name="Weidner S."/>
            <person name="Galibert F."/>
        </authorList>
    </citation>
    <scope>NUCLEOTIDE SEQUENCE [LARGE SCALE GENOMIC DNA]</scope>
    <source>
        <strain>1021</strain>
    </source>
</reference>
<reference key="2">
    <citation type="journal article" date="2001" name="Science">
        <title>The composite genome of the legume symbiont Sinorhizobium meliloti.</title>
        <authorList>
            <person name="Galibert F."/>
            <person name="Finan T.M."/>
            <person name="Long S.R."/>
            <person name="Puehler A."/>
            <person name="Abola P."/>
            <person name="Ampe F."/>
            <person name="Barloy-Hubler F."/>
            <person name="Barnett M.J."/>
            <person name="Becker A."/>
            <person name="Boistard P."/>
            <person name="Bothe G."/>
            <person name="Boutry M."/>
            <person name="Bowser L."/>
            <person name="Buhrmester J."/>
            <person name="Cadieu E."/>
            <person name="Capela D."/>
            <person name="Chain P."/>
            <person name="Cowie A."/>
            <person name="Davis R.W."/>
            <person name="Dreano S."/>
            <person name="Federspiel N.A."/>
            <person name="Fisher R.F."/>
            <person name="Gloux S."/>
            <person name="Godrie T."/>
            <person name="Goffeau A."/>
            <person name="Golding B."/>
            <person name="Gouzy J."/>
            <person name="Gurjal M."/>
            <person name="Hernandez-Lucas I."/>
            <person name="Hong A."/>
            <person name="Huizar L."/>
            <person name="Hyman R.W."/>
            <person name="Jones T."/>
            <person name="Kahn D."/>
            <person name="Kahn M.L."/>
            <person name="Kalman S."/>
            <person name="Keating D.H."/>
            <person name="Kiss E."/>
            <person name="Komp C."/>
            <person name="Lelaure V."/>
            <person name="Masuy D."/>
            <person name="Palm C."/>
            <person name="Peck M.C."/>
            <person name="Pohl T.M."/>
            <person name="Portetelle D."/>
            <person name="Purnelle B."/>
            <person name="Ramsperger U."/>
            <person name="Surzycki R."/>
            <person name="Thebault P."/>
            <person name="Vandenbol M."/>
            <person name="Vorhoelter F.J."/>
            <person name="Weidner S."/>
            <person name="Wells D.H."/>
            <person name="Wong K."/>
            <person name="Yeh K.-C."/>
            <person name="Batut J."/>
        </authorList>
    </citation>
    <scope>NUCLEOTIDE SEQUENCE [LARGE SCALE GENOMIC DNA]</scope>
    <source>
        <strain>1021</strain>
    </source>
</reference>
<comment type="function">
    <text evidence="1">Aspartyl-tRNA synthetase with relaxed tRNA specificity since it is able to aspartylate not only its cognate tRNA(Asp) but also tRNA(Asn). Reaction proceeds in two steps: L-aspartate is first activated by ATP to form Asp-AMP and then transferred to the acceptor end of tRNA(Asp/Asn).</text>
</comment>
<comment type="catalytic activity">
    <reaction evidence="1">
        <text>tRNA(Asx) + L-aspartate + ATP = L-aspartyl-tRNA(Asx) + AMP + diphosphate</text>
        <dbReference type="Rhea" id="RHEA:18349"/>
        <dbReference type="Rhea" id="RHEA-COMP:9710"/>
        <dbReference type="Rhea" id="RHEA-COMP:9711"/>
        <dbReference type="ChEBI" id="CHEBI:29991"/>
        <dbReference type="ChEBI" id="CHEBI:30616"/>
        <dbReference type="ChEBI" id="CHEBI:33019"/>
        <dbReference type="ChEBI" id="CHEBI:78442"/>
        <dbReference type="ChEBI" id="CHEBI:78516"/>
        <dbReference type="ChEBI" id="CHEBI:456215"/>
        <dbReference type="EC" id="6.1.1.23"/>
    </reaction>
</comment>
<comment type="subunit">
    <text evidence="1">Homodimer.</text>
</comment>
<comment type="subcellular location">
    <subcellularLocation>
        <location evidence="1">Cytoplasm</location>
    </subcellularLocation>
</comment>
<comment type="similarity">
    <text evidence="1">Belongs to the class-II aminoacyl-tRNA synthetase family. Type 1 subfamily.</text>
</comment>
<organism>
    <name type="scientific">Rhizobium meliloti (strain 1021)</name>
    <name type="common">Ensifer meliloti</name>
    <name type="synonym">Sinorhizobium meliloti</name>
    <dbReference type="NCBI Taxonomy" id="266834"/>
    <lineage>
        <taxon>Bacteria</taxon>
        <taxon>Pseudomonadati</taxon>
        <taxon>Pseudomonadota</taxon>
        <taxon>Alphaproteobacteria</taxon>
        <taxon>Hyphomicrobiales</taxon>
        <taxon>Rhizobiaceae</taxon>
        <taxon>Sinorhizobium/Ensifer group</taxon>
        <taxon>Sinorhizobium</taxon>
    </lineage>
</organism>
<keyword id="KW-0030">Aminoacyl-tRNA synthetase</keyword>
<keyword id="KW-0067">ATP-binding</keyword>
<keyword id="KW-0963">Cytoplasm</keyword>
<keyword id="KW-0436">Ligase</keyword>
<keyword id="KW-0547">Nucleotide-binding</keyword>
<keyword id="KW-0648">Protein biosynthesis</keyword>
<keyword id="KW-1185">Reference proteome</keyword>
<sequence length="595" mass="67189">MHRYRSHTCAALRKSDVGSTVRLSGWVHRVRDHGGVLFIDLRDHYGMTQVVADPDSPAFKTAETVRGEWVIRVDGAVKARTDDTVNKNMPTGEVELYAREIEVLSAAKELPLPVFGEPDYPEDVRLKYRFLDLRRETLHKNIVRRTEIIAAMRRRMGDIGFTEYTTPILTASSPEGARDFLVPSRIHPGNFYALPQAPQQYKQLLMVAGFDRYFQIAPCFRDEDPRADRLPGEFYQLDLEMSFVEQEDVWDAMEPMIRAIFSDFAGGKPVTDKFPRIPYDTAIRKYGSDKPDLRNPIEMQEVTEHFAGSGFKVFANMIASNPKVEIWAIPAKTGGSRAFCDRMNAWAQSQGQPGLGYIFWRKEGEKLEGAGPLAKNIGEERTDAIRTQLGLEDGDACFFVAGEPAKFYKFAGEARTRAGEELNLVDRDRYELCWIVDFPFYEWNEEEKRVDFAHNPFSMPQGGLTALSSDDLLSIKAFQYDMVCNGFEIASGSIRNQSPELMVKAFENVGLSQADVEERFGGLYRAFQYGAPPHGGMAFGIDRIVMLLVGAKNLREISLFPMNQQAQDLLMGAPSQATPAQLRELSIRPIPQKKD</sequence>
<dbReference type="EC" id="6.1.1.23" evidence="1"/>
<dbReference type="EMBL" id="AL591688">
    <property type="protein sequence ID" value="CAC45773.1"/>
    <property type="molecule type" value="Genomic_DNA"/>
</dbReference>
<dbReference type="RefSeq" id="NP_385300.1">
    <property type="nucleotide sequence ID" value="NC_003047.1"/>
</dbReference>
<dbReference type="RefSeq" id="WP_010969102.1">
    <property type="nucleotide sequence ID" value="NC_003047.1"/>
</dbReference>
<dbReference type="SMR" id="Q92QV4"/>
<dbReference type="EnsemblBacteria" id="CAC45773">
    <property type="protein sequence ID" value="CAC45773"/>
    <property type="gene ID" value="SMc01756"/>
</dbReference>
<dbReference type="KEGG" id="sme:SMc01756"/>
<dbReference type="PATRIC" id="fig|266834.11.peg.2605"/>
<dbReference type="eggNOG" id="COG0173">
    <property type="taxonomic scope" value="Bacteria"/>
</dbReference>
<dbReference type="HOGENOM" id="CLU_014330_3_2_5"/>
<dbReference type="OrthoDB" id="9802326at2"/>
<dbReference type="Proteomes" id="UP000001976">
    <property type="component" value="Chromosome"/>
</dbReference>
<dbReference type="GO" id="GO:0005737">
    <property type="term" value="C:cytoplasm"/>
    <property type="evidence" value="ECO:0007669"/>
    <property type="project" value="UniProtKB-SubCell"/>
</dbReference>
<dbReference type="GO" id="GO:0004815">
    <property type="term" value="F:aspartate-tRNA ligase activity"/>
    <property type="evidence" value="ECO:0007669"/>
    <property type="project" value="UniProtKB-UniRule"/>
</dbReference>
<dbReference type="GO" id="GO:0050560">
    <property type="term" value="F:aspartate-tRNA(Asn) ligase activity"/>
    <property type="evidence" value="ECO:0007669"/>
    <property type="project" value="UniProtKB-EC"/>
</dbReference>
<dbReference type="GO" id="GO:0005524">
    <property type="term" value="F:ATP binding"/>
    <property type="evidence" value="ECO:0007669"/>
    <property type="project" value="UniProtKB-UniRule"/>
</dbReference>
<dbReference type="GO" id="GO:0003676">
    <property type="term" value="F:nucleic acid binding"/>
    <property type="evidence" value="ECO:0007669"/>
    <property type="project" value="InterPro"/>
</dbReference>
<dbReference type="GO" id="GO:0006422">
    <property type="term" value="P:aspartyl-tRNA aminoacylation"/>
    <property type="evidence" value="ECO:0007669"/>
    <property type="project" value="UniProtKB-UniRule"/>
</dbReference>
<dbReference type="CDD" id="cd00777">
    <property type="entry name" value="AspRS_core"/>
    <property type="match status" value="1"/>
</dbReference>
<dbReference type="CDD" id="cd04317">
    <property type="entry name" value="EcAspRS_like_N"/>
    <property type="match status" value="1"/>
</dbReference>
<dbReference type="Gene3D" id="3.30.930.10">
    <property type="entry name" value="Bira Bifunctional Protein, Domain 2"/>
    <property type="match status" value="1"/>
</dbReference>
<dbReference type="Gene3D" id="3.30.1360.30">
    <property type="entry name" value="GAD-like domain"/>
    <property type="match status" value="1"/>
</dbReference>
<dbReference type="Gene3D" id="2.40.50.140">
    <property type="entry name" value="Nucleic acid-binding proteins"/>
    <property type="match status" value="1"/>
</dbReference>
<dbReference type="HAMAP" id="MF_00044">
    <property type="entry name" value="Asp_tRNA_synth_type1"/>
    <property type="match status" value="1"/>
</dbReference>
<dbReference type="InterPro" id="IPR004364">
    <property type="entry name" value="Aa-tRNA-synt_II"/>
</dbReference>
<dbReference type="InterPro" id="IPR006195">
    <property type="entry name" value="aa-tRNA-synth_II"/>
</dbReference>
<dbReference type="InterPro" id="IPR045864">
    <property type="entry name" value="aa-tRNA-synth_II/BPL/LPL"/>
</dbReference>
<dbReference type="InterPro" id="IPR004524">
    <property type="entry name" value="Asp-tRNA-ligase_1"/>
</dbReference>
<dbReference type="InterPro" id="IPR047089">
    <property type="entry name" value="Asp-tRNA-ligase_1_N"/>
</dbReference>
<dbReference type="InterPro" id="IPR002312">
    <property type="entry name" value="Asp/Asn-tRNA-synth_IIb"/>
</dbReference>
<dbReference type="InterPro" id="IPR047090">
    <property type="entry name" value="AspRS_core"/>
</dbReference>
<dbReference type="InterPro" id="IPR004115">
    <property type="entry name" value="GAD-like_sf"/>
</dbReference>
<dbReference type="InterPro" id="IPR029351">
    <property type="entry name" value="GAD_dom"/>
</dbReference>
<dbReference type="InterPro" id="IPR012340">
    <property type="entry name" value="NA-bd_OB-fold"/>
</dbReference>
<dbReference type="InterPro" id="IPR004365">
    <property type="entry name" value="NA-bd_OB_tRNA"/>
</dbReference>
<dbReference type="NCBIfam" id="TIGR00459">
    <property type="entry name" value="aspS_bact"/>
    <property type="match status" value="1"/>
</dbReference>
<dbReference type="NCBIfam" id="NF001750">
    <property type="entry name" value="PRK00476.1"/>
    <property type="match status" value="1"/>
</dbReference>
<dbReference type="PANTHER" id="PTHR22594:SF5">
    <property type="entry name" value="ASPARTATE--TRNA LIGASE, MITOCHONDRIAL"/>
    <property type="match status" value="1"/>
</dbReference>
<dbReference type="PANTHER" id="PTHR22594">
    <property type="entry name" value="ASPARTYL/LYSYL-TRNA SYNTHETASE"/>
    <property type="match status" value="1"/>
</dbReference>
<dbReference type="Pfam" id="PF02938">
    <property type="entry name" value="GAD"/>
    <property type="match status" value="1"/>
</dbReference>
<dbReference type="Pfam" id="PF00152">
    <property type="entry name" value="tRNA-synt_2"/>
    <property type="match status" value="1"/>
</dbReference>
<dbReference type="Pfam" id="PF01336">
    <property type="entry name" value="tRNA_anti-codon"/>
    <property type="match status" value="1"/>
</dbReference>
<dbReference type="PRINTS" id="PR01042">
    <property type="entry name" value="TRNASYNTHASP"/>
</dbReference>
<dbReference type="SUPFAM" id="SSF55681">
    <property type="entry name" value="Class II aaRS and biotin synthetases"/>
    <property type="match status" value="1"/>
</dbReference>
<dbReference type="SUPFAM" id="SSF55261">
    <property type="entry name" value="GAD domain-like"/>
    <property type="match status" value="1"/>
</dbReference>
<dbReference type="SUPFAM" id="SSF50249">
    <property type="entry name" value="Nucleic acid-binding proteins"/>
    <property type="match status" value="1"/>
</dbReference>
<dbReference type="PROSITE" id="PS50862">
    <property type="entry name" value="AA_TRNA_LIGASE_II"/>
    <property type="match status" value="1"/>
</dbReference>
<protein>
    <recommendedName>
        <fullName evidence="1">Aspartate--tRNA(Asp/Asn) ligase</fullName>
        <ecNumber evidence="1">6.1.1.23</ecNumber>
    </recommendedName>
    <alternativeName>
        <fullName evidence="1">Aspartyl-tRNA synthetase</fullName>
        <shortName evidence="1">AspRS</shortName>
    </alternativeName>
    <alternativeName>
        <fullName evidence="1">Non-discriminating aspartyl-tRNA synthetase</fullName>
        <shortName evidence="1">ND-AspRS</shortName>
    </alternativeName>
</protein>